<sequence length="255" mass="28539">MSVISMKQLLEAGVHFGHQTRRWNPKMKPYIFTERNGIHVIDLQKTVKLVDDAYNYVKNASQEGAVVLFVGTKKQAAEAVKEEALRAGQYYVNHRWLGGMLTNWNTIQTRVTRLKEINKMEEEGTFEVLPKKEVVLLNKERERLEKFIGGIADMPRIPDVMYIVDPHAEQIAVKEAKTLGIPVVAMVDTNADPEPIDVVIPANDDAIRAVKLITAKMADAIIEGRQGEDAADDFVAEEAASEESLEELAEIVEGK</sequence>
<reference key="1">
    <citation type="journal article" date="2001" name="Genome Res.">
        <title>The complete genome sequence of the lactic acid bacterium Lactococcus lactis ssp. lactis IL1403.</title>
        <authorList>
            <person name="Bolotin A."/>
            <person name="Wincker P."/>
            <person name="Mauger S."/>
            <person name="Jaillon O."/>
            <person name="Malarme K."/>
            <person name="Weissenbach J."/>
            <person name="Ehrlich S.D."/>
            <person name="Sorokin A."/>
        </authorList>
    </citation>
    <scope>NUCLEOTIDE SEQUENCE [LARGE SCALE GENOMIC DNA]</scope>
    <source>
        <strain>IL1403</strain>
    </source>
</reference>
<evidence type="ECO:0000256" key="1">
    <source>
        <dbReference type="SAM" id="MobiDB-lite"/>
    </source>
</evidence>
<evidence type="ECO:0000305" key="2"/>
<proteinExistence type="inferred from homology"/>
<gene>
    <name type="primary">rpsB</name>
    <name type="ordered locus">LL2153</name>
    <name type="ORF">L0379</name>
</gene>
<dbReference type="EMBL" id="AE005176">
    <property type="protein sequence ID" value="AAK06251.1"/>
    <property type="molecule type" value="Genomic_DNA"/>
</dbReference>
<dbReference type="PIR" id="A86894">
    <property type="entry name" value="A86894"/>
</dbReference>
<dbReference type="RefSeq" id="NP_268310.1">
    <property type="nucleotide sequence ID" value="NC_002662.1"/>
</dbReference>
<dbReference type="RefSeq" id="WP_010906340.1">
    <property type="nucleotide sequence ID" value="NC_002662.1"/>
</dbReference>
<dbReference type="SMR" id="Q9CDR4"/>
<dbReference type="PaxDb" id="272623-L0379"/>
<dbReference type="EnsemblBacteria" id="AAK06251">
    <property type="protein sequence ID" value="AAK06251"/>
    <property type="gene ID" value="L0379"/>
</dbReference>
<dbReference type="KEGG" id="lla:L0379"/>
<dbReference type="PATRIC" id="fig|272623.7.peg.2312"/>
<dbReference type="eggNOG" id="COG0052">
    <property type="taxonomic scope" value="Bacteria"/>
</dbReference>
<dbReference type="HOGENOM" id="CLU_040318_1_2_9"/>
<dbReference type="OrthoDB" id="9808036at2"/>
<dbReference type="Proteomes" id="UP000002196">
    <property type="component" value="Chromosome"/>
</dbReference>
<dbReference type="GO" id="GO:0022627">
    <property type="term" value="C:cytosolic small ribosomal subunit"/>
    <property type="evidence" value="ECO:0007669"/>
    <property type="project" value="TreeGrafter"/>
</dbReference>
<dbReference type="GO" id="GO:0003735">
    <property type="term" value="F:structural constituent of ribosome"/>
    <property type="evidence" value="ECO:0007669"/>
    <property type="project" value="InterPro"/>
</dbReference>
<dbReference type="GO" id="GO:0006412">
    <property type="term" value="P:translation"/>
    <property type="evidence" value="ECO:0007669"/>
    <property type="project" value="UniProtKB-UniRule"/>
</dbReference>
<dbReference type="CDD" id="cd01425">
    <property type="entry name" value="RPS2"/>
    <property type="match status" value="1"/>
</dbReference>
<dbReference type="FunFam" id="1.10.287.610:FF:000001">
    <property type="entry name" value="30S ribosomal protein S2"/>
    <property type="match status" value="1"/>
</dbReference>
<dbReference type="Gene3D" id="3.40.50.10490">
    <property type="entry name" value="Glucose-6-phosphate isomerase like protein, domain 1"/>
    <property type="match status" value="1"/>
</dbReference>
<dbReference type="Gene3D" id="1.10.287.610">
    <property type="entry name" value="Helix hairpin bin"/>
    <property type="match status" value="1"/>
</dbReference>
<dbReference type="HAMAP" id="MF_00291_B">
    <property type="entry name" value="Ribosomal_uS2_B"/>
    <property type="match status" value="1"/>
</dbReference>
<dbReference type="InterPro" id="IPR001865">
    <property type="entry name" value="Ribosomal_uS2"/>
</dbReference>
<dbReference type="InterPro" id="IPR005706">
    <property type="entry name" value="Ribosomal_uS2_bac/mit/plastid"/>
</dbReference>
<dbReference type="InterPro" id="IPR018130">
    <property type="entry name" value="Ribosomal_uS2_CS"/>
</dbReference>
<dbReference type="InterPro" id="IPR023591">
    <property type="entry name" value="Ribosomal_uS2_flav_dom_sf"/>
</dbReference>
<dbReference type="NCBIfam" id="TIGR01011">
    <property type="entry name" value="rpsB_bact"/>
    <property type="match status" value="1"/>
</dbReference>
<dbReference type="PANTHER" id="PTHR12534">
    <property type="entry name" value="30S RIBOSOMAL PROTEIN S2 PROKARYOTIC AND ORGANELLAR"/>
    <property type="match status" value="1"/>
</dbReference>
<dbReference type="PANTHER" id="PTHR12534:SF0">
    <property type="entry name" value="SMALL RIBOSOMAL SUBUNIT PROTEIN US2M"/>
    <property type="match status" value="1"/>
</dbReference>
<dbReference type="Pfam" id="PF00318">
    <property type="entry name" value="Ribosomal_S2"/>
    <property type="match status" value="1"/>
</dbReference>
<dbReference type="PRINTS" id="PR00395">
    <property type="entry name" value="RIBOSOMALS2"/>
</dbReference>
<dbReference type="SUPFAM" id="SSF52313">
    <property type="entry name" value="Ribosomal protein S2"/>
    <property type="match status" value="1"/>
</dbReference>
<dbReference type="PROSITE" id="PS00962">
    <property type="entry name" value="RIBOSOMAL_S2_1"/>
    <property type="match status" value="1"/>
</dbReference>
<keyword id="KW-1185">Reference proteome</keyword>
<keyword id="KW-0687">Ribonucleoprotein</keyword>
<keyword id="KW-0689">Ribosomal protein</keyword>
<comment type="similarity">
    <text evidence="2">Belongs to the universal ribosomal protein uS2 family.</text>
</comment>
<accession>Q9CDR4</accession>
<organism>
    <name type="scientific">Lactococcus lactis subsp. lactis (strain IL1403)</name>
    <name type="common">Streptococcus lactis</name>
    <dbReference type="NCBI Taxonomy" id="272623"/>
    <lineage>
        <taxon>Bacteria</taxon>
        <taxon>Bacillati</taxon>
        <taxon>Bacillota</taxon>
        <taxon>Bacilli</taxon>
        <taxon>Lactobacillales</taxon>
        <taxon>Streptococcaceae</taxon>
        <taxon>Lactococcus</taxon>
    </lineage>
</organism>
<name>RS2_LACLA</name>
<feature type="chain" id="PRO_0000134182" description="Small ribosomal subunit protein uS2">
    <location>
        <begin position="1"/>
        <end position="255"/>
    </location>
</feature>
<feature type="region of interest" description="Disordered" evidence="1">
    <location>
        <begin position="233"/>
        <end position="255"/>
    </location>
</feature>
<protein>
    <recommendedName>
        <fullName evidence="2">Small ribosomal subunit protein uS2</fullName>
    </recommendedName>
    <alternativeName>
        <fullName>30S ribosomal protein S2</fullName>
    </alternativeName>
</protein>